<dbReference type="EC" id="3.1.3.16"/>
<dbReference type="EMBL" id="AC007290">
    <property type="protein sequence ID" value="AAD26883.1"/>
    <property type="status" value="ALT_SEQ"/>
    <property type="molecule type" value="Genomic_DNA"/>
</dbReference>
<dbReference type="EMBL" id="CP002685">
    <property type="protein sequence ID" value="AEC07953.1"/>
    <property type="molecule type" value="Genomic_DNA"/>
</dbReference>
<dbReference type="EMBL" id="AK229113">
    <property type="protein sequence ID" value="BAF00990.1"/>
    <property type="molecule type" value="mRNA"/>
</dbReference>
<dbReference type="PIR" id="B84670">
    <property type="entry name" value="B84670"/>
</dbReference>
<dbReference type="RefSeq" id="NP_180289.3">
    <molecule id="Q9SHS7-1"/>
    <property type="nucleotide sequence ID" value="NM_128279.4"/>
</dbReference>
<dbReference type="SMR" id="Q9SHS7"/>
<dbReference type="BioGRID" id="2615">
    <property type="interactions" value="2"/>
</dbReference>
<dbReference type="FunCoup" id="Q9SHS7">
    <property type="interactions" value="628"/>
</dbReference>
<dbReference type="STRING" id="3702.Q9SHS7"/>
<dbReference type="GlyGen" id="Q9SHS7">
    <property type="glycosylation" value="2 sites"/>
</dbReference>
<dbReference type="iPTMnet" id="Q9SHS7"/>
<dbReference type="PaxDb" id="3702-AT2G27210.1"/>
<dbReference type="ProteomicsDB" id="240635">
    <molecule id="Q9SHS7-1"/>
</dbReference>
<dbReference type="EnsemblPlants" id="AT2G27210.1">
    <molecule id="Q9SHS7-1"/>
    <property type="protein sequence ID" value="AT2G27210.1"/>
    <property type="gene ID" value="AT2G27210"/>
</dbReference>
<dbReference type="GeneID" id="817263"/>
<dbReference type="Gramene" id="AT2G27210.1">
    <molecule id="Q9SHS7-1"/>
    <property type="protein sequence ID" value="AT2G27210.1"/>
    <property type="gene ID" value="AT2G27210"/>
</dbReference>
<dbReference type="KEGG" id="ath:AT2G27210"/>
<dbReference type="Araport" id="AT2G27210"/>
<dbReference type="TAIR" id="AT2G27210">
    <property type="gene designation" value="BSL3"/>
</dbReference>
<dbReference type="eggNOG" id="KOG0374">
    <property type="taxonomic scope" value="Eukaryota"/>
</dbReference>
<dbReference type="eggNOG" id="KOG0379">
    <property type="taxonomic scope" value="Eukaryota"/>
</dbReference>
<dbReference type="HOGENOM" id="CLU_004962_7_0_1"/>
<dbReference type="InParanoid" id="Q9SHS7"/>
<dbReference type="PhylomeDB" id="Q9SHS7"/>
<dbReference type="PRO" id="PR:Q9SHS7"/>
<dbReference type="Proteomes" id="UP000006548">
    <property type="component" value="Chromosome 2"/>
</dbReference>
<dbReference type="ExpressionAtlas" id="Q9SHS7">
    <property type="expression patterns" value="baseline and differential"/>
</dbReference>
<dbReference type="GO" id="GO:0005634">
    <property type="term" value="C:nucleus"/>
    <property type="evidence" value="ECO:0007669"/>
    <property type="project" value="UniProtKB-SubCell"/>
</dbReference>
<dbReference type="GO" id="GO:0005777">
    <property type="term" value="C:peroxisome"/>
    <property type="evidence" value="ECO:0007005"/>
    <property type="project" value="TAIR"/>
</dbReference>
<dbReference type="GO" id="GO:0046872">
    <property type="term" value="F:metal ion binding"/>
    <property type="evidence" value="ECO:0007669"/>
    <property type="project" value="UniProtKB-KW"/>
</dbReference>
<dbReference type="GO" id="GO:0004722">
    <property type="term" value="F:protein serine/threonine phosphatase activity"/>
    <property type="evidence" value="ECO:0007669"/>
    <property type="project" value="UniProtKB-EC"/>
</dbReference>
<dbReference type="GO" id="GO:0009742">
    <property type="term" value="P:brassinosteroid mediated signaling pathway"/>
    <property type="evidence" value="ECO:0007669"/>
    <property type="project" value="InterPro"/>
</dbReference>
<dbReference type="CDD" id="cd07419">
    <property type="entry name" value="MPP_Bsu1_C"/>
    <property type="match status" value="1"/>
</dbReference>
<dbReference type="FunFam" id="2.120.10.80:FF:000042">
    <property type="entry name" value="Serine/threonine-protein phosphatase"/>
    <property type="match status" value="1"/>
</dbReference>
<dbReference type="FunFam" id="2.120.10.80:FF:000139">
    <property type="entry name" value="Serine/threonine-protein phosphatase"/>
    <property type="match status" value="1"/>
</dbReference>
<dbReference type="FunFam" id="3.60.21.10:FF:000008">
    <property type="entry name" value="Serine/threonine-protein phosphatase"/>
    <property type="match status" value="1"/>
</dbReference>
<dbReference type="Gene3D" id="3.60.21.10">
    <property type="match status" value="1"/>
</dbReference>
<dbReference type="Gene3D" id="2.120.10.80">
    <property type="entry name" value="Kelch-type beta propeller"/>
    <property type="match status" value="2"/>
</dbReference>
<dbReference type="InterPro" id="IPR004843">
    <property type="entry name" value="Calcineurin-like_PHP_ApaH"/>
</dbReference>
<dbReference type="InterPro" id="IPR015915">
    <property type="entry name" value="Kelch-typ_b-propeller"/>
</dbReference>
<dbReference type="InterPro" id="IPR011498">
    <property type="entry name" value="Kelch_2"/>
</dbReference>
<dbReference type="InterPro" id="IPR029052">
    <property type="entry name" value="Metallo-depent_PP-like"/>
</dbReference>
<dbReference type="InterPro" id="IPR041758">
    <property type="entry name" value="MPP_BSL_C"/>
</dbReference>
<dbReference type="InterPro" id="IPR006186">
    <property type="entry name" value="Ser/Thr-sp_prot-phosphatase"/>
</dbReference>
<dbReference type="InterPro" id="IPR012391">
    <property type="entry name" value="Ser/Thr_prot_Pase_BSU1"/>
</dbReference>
<dbReference type="PANTHER" id="PTHR46422">
    <property type="entry name" value="SERINE/THREONINE-PROTEIN PHOSPHATASE BSL3"/>
    <property type="match status" value="1"/>
</dbReference>
<dbReference type="PANTHER" id="PTHR46422:SF4">
    <property type="entry name" value="SERINE_THREONINE-PROTEIN PHOSPHATASE BSL3"/>
    <property type="match status" value="1"/>
</dbReference>
<dbReference type="Pfam" id="PF07646">
    <property type="entry name" value="Kelch_2"/>
    <property type="match status" value="1"/>
</dbReference>
<dbReference type="Pfam" id="PF24681">
    <property type="entry name" value="Kelch_KLHDC2_KLHL20_DRC7"/>
    <property type="match status" value="1"/>
</dbReference>
<dbReference type="Pfam" id="PF00149">
    <property type="entry name" value="Metallophos"/>
    <property type="match status" value="1"/>
</dbReference>
<dbReference type="PIRSF" id="PIRSF036363">
    <property type="entry name" value="PPP_BSU1"/>
    <property type="match status" value="1"/>
</dbReference>
<dbReference type="PRINTS" id="PR00114">
    <property type="entry name" value="STPHPHTASE"/>
</dbReference>
<dbReference type="SMART" id="SM00156">
    <property type="entry name" value="PP2Ac"/>
    <property type="match status" value="1"/>
</dbReference>
<dbReference type="SUPFAM" id="SSF117281">
    <property type="entry name" value="Kelch motif"/>
    <property type="match status" value="1"/>
</dbReference>
<dbReference type="SUPFAM" id="SSF56300">
    <property type="entry name" value="Metallo-dependent phosphatases"/>
    <property type="match status" value="1"/>
</dbReference>
<dbReference type="PROSITE" id="PS00125">
    <property type="entry name" value="SER_THR_PHOSPHATASE"/>
    <property type="match status" value="1"/>
</dbReference>
<name>BSL3_ARATH</name>
<reference key="1">
    <citation type="journal article" date="1999" name="Nature">
        <title>Sequence and analysis of chromosome 2 of the plant Arabidopsis thaliana.</title>
        <authorList>
            <person name="Lin X."/>
            <person name="Kaul S."/>
            <person name="Rounsley S.D."/>
            <person name="Shea T.P."/>
            <person name="Benito M.-I."/>
            <person name="Town C.D."/>
            <person name="Fujii C.Y."/>
            <person name="Mason T.M."/>
            <person name="Bowman C.L."/>
            <person name="Barnstead M.E."/>
            <person name="Feldblyum T.V."/>
            <person name="Buell C.R."/>
            <person name="Ketchum K.A."/>
            <person name="Lee J.J."/>
            <person name="Ronning C.M."/>
            <person name="Koo H.L."/>
            <person name="Moffat K.S."/>
            <person name="Cronin L.A."/>
            <person name="Shen M."/>
            <person name="Pai G."/>
            <person name="Van Aken S."/>
            <person name="Umayam L."/>
            <person name="Tallon L.J."/>
            <person name="Gill J.E."/>
            <person name="Adams M.D."/>
            <person name="Carrera A.J."/>
            <person name="Creasy T.H."/>
            <person name="Goodman H.M."/>
            <person name="Somerville C.R."/>
            <person name="Copenhaver G.P."/>
            <person name="Preuss D."/>
            <person name="Nierman W.C."/>
            <person name="White O."/>
            <person name="Eisen J.A."/>
            <person name="Salzberg S.L."/>
            <person name="Fraser C.M."/>
            <person name="Venter J.C."/>
        </authorList>
    </citation>
    <scope>NUCLEOTIDE SEQUENCE [LARGE SCALE GENOMIC DNA]</scope>
    <source>
        <strain>cv. Columbia</strain>
    </source>
</reference>
<reference key="2">
    <citation type="journal article" date="2017" name="Plant J.">
        <title>Araport11: a complete reannotation of the Arabidopsis thaliana reference genome.</title>
        <authorList>
            <person name="Cheng C.Y."/>
            <person name="Krishnakumar V."/>
            <person name="Chan A.P."/>
            <person name="Thibaud-Nissen F."/>
            <person name="Schobel S."/>
            <person name="Town C.D."/>
        </authorList>
    </citation>
    <scope>GENOME REANNOTATION</scope>
    <source>
        <strain>cv. Columbia</strain>
    </source>
</reference>
<reference key="3">
    <citation type="submission" date="2006-07" db="EMBL/GenBank/DDBJ databases">
        <title>Large-scale analysis of RIKEN Arabidopsis full-length (RAFL) cDNAs.</title>
        <authorList>
            <person name="Totoki Y."/>
            <person name="Seki M."/>
            <person name="Ishida J."/>
            <person name="Nakajima M."/>
            <person name="Enju A."/>
            <person name="Kamiya A."/>
            <person name="Narusaka M."/>
            <person name="Shin-i T."/>
            <person name="Nakagawa M."/>
            <person name="Sakamoto N."/>
            <person name="Oishi K."/>
            <person name="Kohara Y."/>
            <person name="Kobayashi M."/>
            <person name="Toyoda A."/>
            <person name="Sakaki Y."/>
            <person name="Sakurai T."/>
            <person name="Iida K."/>
            <person name="Akiyama K."/>
            <person name="Satou M."/>
            <person name="Toyoda T."/>
            <person name="Konagaya A."/>
            <person name="Carninci P."/>
            <person name="Kawai J."/>
            <person name="Hayashizaki Y."/>
            <person name="Shinozaki K."/>
        </authorList>
    </citation>
    <scope>NUCLEOTIDE SEQUENCE [LARGE SCALE MRNA] (ISOFORM 2)</scope>
    <source>
        <strain>cv. Columbia</strain>
    </source>
</reference>
<reference key="4">
    <citation type="journal article" date="2004" name="Genes Dev.">
        <title>Nuclear protein phosphatases with Kelch-repeat domains modulate the response to brassinosteroids in Arabidopsis.</title>
        <authorList>
            <person name="Mora-Garcia S."/>
            <person name="Vert G."/>
            <person name="Yin Y."/>
            <person name="Cano-Delgado A."/>
            <person name="Cheong H."/>
            <person name="Chory J."/>
        </authorList>
    </citation>
    <scope>FUNCTION</scope>
    <scope>TISSUE SPECIFICITY</scope>
</reference>
<reference key="5">
    <citation type="journal article" date="2007" name="Trends Plant Sci.">
        <title>Arabidopsis PPP family of serine/threonine phosphatases.</title>
        <authorList>
            <person name="Farkas I."/>
            <person name="Dombradi V."/>
            <person name="Miskei M."/>
            <person name="Szabados L."/>
            <person name="Koncz C."/>
        </authorList>
    </citation>
    <scope>GENE FAMILY</scope>
    <scope>NOMENCLATURE</scope>
</reference>
<reference key="6">
    <citation type="journal article" date="2008" name="J. Proteome Res.">
        <title>Site-specific phosphorylation profiling of Arabidopsis proteins by mass spectrometry and peptide chip analysis.</title>
        <authorList>
            <person name="de la Fuente van Bentem S."/>
            <person name="Anrather D."/>
            <person name="Dohnal I."/>
            <person name="Roitinger E."/>
            <person name="Csaszar E."/>
            <person name="Joore J."/>
            <person name="Buijnink J."/>
            <person name="Carreri A."/>
            <person name="Forzani C."/>
            <person name="Lorkovic Z.J."/>
            <person name="Barta A."/>
            <person name="Lecourieux D."/>
            <person name="Verhounig A."/>
            <person name="Jonak C."/>
            <person name="Hirt H."/>
        </authorList>
    </citation>
    <scope>IDENTIFICATION BY MASS SPECTROMETRY [LARGE SCALE ANALYSIS]</scope>
    <source>
        <tissue>Root</tissue>
    </source>
</reference>
<reference key="7">
    <citation type="journal article" date="2009" name="J. Proteomics">
        <title>Phosphoproteomic analysis of nuclei-enriched fractions from Arabidopsis thaliana.</title>
        <authorList>
            <person name="Jones A.M.E."/>
            <person name="MacLean D."/>
            <person name="Studholme D.J."/>
            <person name="Serna-Sanz A."/>
            <person name="Andreasson E."/>
            <person name="Rathjen J.P."/>
            <person name="Peck S.C."/>
        </authorList>
    </citation>
    <scope>SUBCELLULAR LOCATION</scope>
    <source>
        <strain>cv. Columbia</strain>
    </source>
</reference>
<accession>Q9SHS7</accession>
<accession>Q0WPF9</accession>
<proteinExistence type="evidence at protein level"/>
<evidence type="ECO:0000250" key="1"/>
<evidence type="ECO:0000250" key="2">
    <source>
        <dbReference type="UniProtKB" id="Q9LR78"/>
    </source>
</evidence>
<evidence type="ECO:0000256" key="3">
    <source>
        <dbReference type="SAM" id="MobiDB-lite"/>
    </source>
</evidence>
<evidence type="ECO:0000269" key="4">
    <source>
    </source>
</evidence>
<evidence type="ECO:0000269" key="5">
    <source>
    </source>
</evidence>
<evidence type="ECO:0000303" key="6">
    <source ref="3"/>
</evidence>
<evidence type="ECO:0000305" key="7"/>
<feature type="chain" id="PRO_0000058907" description="Serine/threonine-protein phosphatase BSL3">
    <location>
        <begin position="1"/>
        <end position="1006"/>
    </location>
</feature>
<feature type="repeat" description="Kelch 1">
    <location>
        <begin position="138"/>
        <end position="184"/>
    </location>
</feature>
<feature type="repeat" description="Kelch 2">
    <location>
        <begin position="242"/>
        <end position="290"/>
    </location>
</feature>
<feature type="repeat" description="Kelch 3">
    <location>
        <begin position="295"/>
        <end position="345"/>
    </location>
</feature>
<feature type="repeat" description="Kelch 4">
    <location>
        <begin position="351"/>
        <end position="398"/>
    </location>
</feature>
<feature type="repeat" description="Kelch 5">
    <location>
        <begin position="419"/>
        <end position="465"/>
    </location>
</feature>
<feature type="region of interest" description="Disordered" evidence="3">
    <location>
        <begin position="1"/>
        <end position="67"/>
    </location>
</feature>
<feature type="region of interest" description="Disordered" evidence="3">
    <location>
        <begin position="454"/>
        <end position="494"/>
    </location>
</feature>
<feature type="region of interest" description="Disordered" evidence="3">
    <location>
        <begin position="552"/>
        <end position="579"/>
    </location>
</feature>
<feature type="region of interest" description="Disordered" evidence="3">
    <location>
        <begin position="982"/>
        <end position="1006"/>
    </location>
</feature>
<feature type="compositionally biased region" description="Low complexity" evidence="3">
    <location>
        <begin position="38"/>
        <end position="47"/>
    </location>
</feature>
<feature type="compositionally biased region" description="Low complexity" evidence="3">
    <location>
        <begin position="54"/>
        <end position="67"/>
    </location>
</feature>
<feature type="active site" description="Proton donor" evidence="1">
    <location>
        <position position="776"/>
    </location>
</feature>
<feature type="binding site" evidence="1">
    <location>
        <position position="709"/>
    </location>
    <ligand>
        <name>Mn(2+)</name>
        <dbReference type="ChEBI" id="CHEBI:29035"/>
        <label>1</label>
    </ligand>
</feature>
<feature type="binding site" evidence="1">
    <location>
        <position position="711"/>
    </location>
    <ligand>
        <name>Mn(2+)</name>
        <dbReference type="ChEBI" id="CHEBI:29035"/>
        <label>1</label>
    </ligand>
</feature>
<feature type="binding site" evidence="1">
    <location>
        <position position="743"/>
    </location>
    <ligand>
        <name>Mn(2+)</name>
        <dbReference type="ChEBI" id="CHEBI:29035"/>
        <label>1</label>
    </ligand>
</feature>
<feature type="binding site" evidence="1">
    <location>
        <position position="743"/>
    </location>
    <ligand>
        <name>Mn(2+)</name>
        <dbReference type="ChEBI" id="CHEBI:29035"/>
        <label>2</label>
    </ligand>
</feature>
<feature type="binding site" evidence="1">
    <location>
        <position position="775"/>
    </location>
    <ligand>
        <name>Mn(2+)</name>
        <dbReference type="ChEBI" id="CHEBI:29035"/>
        <label>2</label>
    </ligand>
</feature>
<feature type="binding site" evidence="1">
    <location>
        <position position="828"/>
    </location>
    <ligand>
        <name>Mn(2+)</name>
        <dbReference type="ChEBI" id="CHEBI:29035"/>
        <label>2</label>
    </ligand>
</feature>
<feature type="binding site" evidence="1">
    <location>
        <position position="907"/>
    </location>
    <ligand>
        <name>Mn(2+)</name>
        <dbReference type="ChEBI" id="CHEBI:29035"/>
        <label>2</label>
    </ligand>
</feature>
<feature type="modified residue" description="Phosphoserine" evidence="2">
    <location>
        <position position="616"/>
    </location>
</feature>
<feature type="modified residue" description="Phosphoserine" evidence="2">
    <location>
        <position position="964"/>
    </location>
</feature>
<feature type="splice variant" id="VSP_028729" description="In isoform 2." evidence="6">
    <original>VVAHLLKPRGWKPPVRRQFFLDCNEIADLCDSAERIFSSEPTVLQLKAPIKIF</original>
    <variation>NVSSQANLLCYSLKLLLRYLVICMASLGISCAFLMNMVHHQQLETYHTSITSS</variation>
    <location>
        <begin position="655"/>
        <end position="707"/>
    </location>
</feature>
<feature type="splice variant" id="VSP_028730" description="In isoform 2." evidence="6">
    <location>
        <begin position="708"/>
        <end position="1006"/>
    </location>
</feature>
<organism>
    <name type="scientific">Arabidopsis thaliana</name>
    <name type="common">Mouse-ear cress</name>
    <dbReference type="NCBI Taxonomy" id="3702"/>
    <lineage>
        <taxon>Eukaryota</taxon>
        <taxon>Viridiplantae</taxon>
        <taxon>Streptophyta</taxon>
        <taxon>Embryophyta</taxon>
        <taxon>Tracheophyta</taxon>
        <taxon>Spermatophyta</taxon>
        <taxon>Magnoliopsida</taxon>
        <taxon>eudicotyledons</taxon>
        <taxon>Gunneridae</taxon>
        <taxon>Pentapetalae</taxon>
        <taxon>rosids</taxon>
        <taxon>malvids</taxon>
        <taxon>Brassicales</taxon>
        <taxon>Brassicaceae</taxon>
        <taxon>Camelineae</taxon>
        <taxon>Arabidopsis</taxon>
    </lineage>
</organism>
<keyword id="KW-0025">Alternative splicing</keyword>
<keyword id="KW-0378">Hydrolase</keyword>
<keyword id="KW-0880">Kelch repeat</keyword>
<keyword id="KW-0464">Manganese</keyword>
<keyword id="KW-0479">Metal-binding</keyword>
<keyword id="KW-0539">Nucleus</keyword>
<keyword id="KW-0597">Phosphoprotein</keyword>
<keyword id="KW-0904">Protein phosphatase</keyword>
<keyword id="KW-1185">Reference proteome</keyword>
<keyword id="KW-0677">Repeat</keyword>
<sequence>MDLDSSMVPENDQDPIATSENQSPMEEKEEASEQQTGSESESASLTPSLPPPSQQQQQQQQQPQVTAVVGPRCAPTYSVVNAIIEKKEDGPGPRCGHTLTAVPAVGEEGTSSYIGPRLILFGGATALEGNSGGTGTPTSAGSAGIRLAGATADVHCYDVLSNKWSRLTPYGEPPSPRAAHVATAVGTMVVIQGGIGPAGLSAEDLHVLDLTQQRPRWHRVVVQGPGPGPRYGHVMALVGQRYLMAIGGNDGKRPLADVWALDTAAKPYEWRKLEPEGEGPPPCMYATASARSDGLLLLCGGRDANSVPLASAYGLAKHRDGRWEWAIAPGVSPSARYQHAAVFVNARLHVSGGALGGGRMVEDSSSVAVLDTAAGVWCDTKSVVTSPRTGRYSADAAGGDASVELTRRCRHAAAAVGDLIFIYGGLRGGVLLDDLLVAEDLAAAETTSAASHAAAAAAATNTPPGRSPGRYGFSDERTGELPESAPDAVVLGSPVAPPVNGDMYTDISTENAMVPGIRRTSKGVEYLVEASAAEAEAISATLAAAKARQVNGEVELPDRDRGAEATPSGKPSLSLIKPDSAVPNSVIPAGVRLHHRAVVVAAETGGALGGMVRQLSIDQFENEGRRVSYGTPESATAARKLLDRQMSINSVPKKVVAHLLKPRGWKPPVRRQFFLDCNEIADLCDSAERIFSSEPTVLQLKAPIKIFGDLHGQFGDLMRLFDEYGSPSTAGDISYIDYLFLGDYVDRGQHSLETITLLLALKVEYQHNVHLIRGNHEAADINALFGFRIECIERMGERDGIWVWHRINRLFNWLPLAALIEKKIICMHGGIGRSINHVEQIENIQRPITMEAGSIVLMDLLWSDPTENDSVEGLRPNARGPGLVTFGPDRVMEFCNNNDLQLIVRAHECVMDGFERFAQGHLITLFSATNYCGTANNAGAILVLGRDLVVVPKLIHPLPPAITSPETSPERHIEDTWMQELNVNRPPTPTRGRPQNPNDRGSLAWI</sequence>
<gene>
    <name type="primary">BSL3</name>
    <name type="ordered locus">At2g27210</name>
    <name type="ORF">T22O13.2</name>
</gene>
<comment type="function">
    <text evidence="4">Phosphatase involved in elongation process, probably by acting as a regulator of brassinolide signaling.</text>
</comment>
<comment type="catalytic activity">
    <reaction>
        <text>O-phospho-L-seryl-[protein] + H2O = L-seryl-[protein] + phosphate</text>
        <dbReference type="Rhea" id="RHEA:20629"/>
        <dbReference type="Rhea" id="RHEA-COMP:9863"/>
        <dbReference type="Rhea" id="RHEA-COMP:11604"/>
        <dbReference type="ChEBI" id="CHEBI:15377"/>
        <dbReference type="ChEBI" id="CHEBI:29999"/>
        <dbReference type="ChEBI" id="CHEBI:43474"/>
        <dbReference type="ChEBI" id="CHEBI:83421"/>
        <dbReference type="EC" id="3.1.3.16"/>
    </reaction>
</comment>
<comment type="catalytic activity">
    <reaction>
        <text>O-phospho-L-threonyl-[protein] + H2O = L-threonyl-[protein] + phosphate</text>
        <dbReference type="Rhea" id="RHEA:47004"/>
        <dbReference type="Rhea" id="RHEA-COMP:11060"/>
        <dbReference type="Rhea" id="RHEA-COMP:11605"/>
        <dbReference type="ChEBI" id="CHEBI:15377"/>
        <dbReference type="ChEBI" id="CHEBI:30013"/>
        <dbReference type="ChEBI" id="CHEBI:43474"/>
        <dbReference type="ChEBI" id="CHEBI:61977"/>
        <dbReference type="EC" id="3.1.3.16"/>
    </reaction>
</comment>
<comment type="cofactor">
    <cofactor evidence="1">
        <name>Mn(2+)</name>
        <dbReference type="ChEBI" id="CHEBI:29035"/>
    </cofactor>
    <text evidence="1">Binds 2 manganese ions per subunit.</text>
</comment>
<comment type="subcellular location">
    <subcellularLocation>
        <location evidence="5">Nucleus</location>
    </subcellularLocation>
</comment>
<comment type="alternative products">
    <event type="alternative splicing"/>
    <isoform>
        <id>Q9SHS7-1</id>
        <name>1</name>
        <sequence type="displayed"/>
    </isoform>
    <isoform>
        <id>Q9SHS7-2</id>
        <name>2</name>
        <sequence type="described" ref="VSP_028729 VSP_028730"/>
    </isoform>
</comment>
<comment type="tissue specificity">
    <text evidence="4">Expressed throughout the plant, with a higher level in younger parts.</text>
</comment>
<comment type="similarity">
    <text evidence="7">Belongs to the PPP phosphatase family. BSU subfamily.</text>
</comment>
<comment type="sequence caution" evidence="7">
    <conflict type="erroneous gene model prediction">
        <sequence resource="EMBL-CDS" id="AAD26883"/>
    </conflict>
</comment>
<protein>
    <recommendedName>
        <fullName>Serine/threonine-protein phosphatase BSL3</fullName>
        <ecNumber>3.1.3.16</ecNumber>
    </recommendedName>
    <alternativeName>
        <fullName>BSU1-like protein 3</fullName>
    </alternativeName>
</protein>